<keyword id="KW-0998">Cell outer membrane</keyword>
<keyword id="KW-0449">Lipoprotein</keyword>
<keyword id="KW-0472">Membrane</keyword>
<keyword id="KW-0564">Palmitate</keyword>
<keyword id="KW-1185">Reference proteome</keyword>
<keyword id="KW-0732">Signal</keyword>
<sequence>MIKRVLVVSMVGLSLVGCVNNDTLSGDVYTASEAKQVQNVSYGTIVNVRPVQIQGGDDSNVIGAIGGAVLGGFLGNTVGGGTGRSLATAAGAVAGGVAGQGVQSAMNKTQGVELEIRKDDGNTIMVVQKQGNTRFSPGQRVVLASNGSQVTVSPR</sequence>
<protein>
    <recommendedName>
        <fullName>Outer membrane lipoprotein SlyB</fullName>
    </recommendedName>
</protein>
<comment type="subcellular location">
    <subcellularLocation>
        <location evidence="3">Cell outer membrane</location>
        <topology evidence="1">Lipid-anchor</topology>
    </subcellularLocation>
</comment>
<comment type="induction">
    <text evidence="2">Induced by low extracellular levels of magnesium via the PhoQ/PhoP two-component regulatory system.</text>
</comment>
<comment type="similarity">
    <text evidence="3">Belongs to the Pcp/SlyB lipoprotein family.</text>
</comment>
<organism>
    <name type="scientific">Escherichia coli (strain K12)</name>
    <dbReference type="NCBI Taxonomy" id="83333"/>
    <lineage>
        <taxon>Bacteria</taxon>
        <taxon>Pseudomonadati</taxon>
        <taxon>Pseudomonadota</taxon>
        <taxon>Gammaproteobacteria</taxon>
        <taxon>Enterobacterales</taxon>
        <taxon>Enterobacteriaceae</taxon>
        <taxon>Escherichia</taxon>
    </lineage>
</organism>
<feature type="signal peptide" evidence="1">
    <location>
        <begin position="1"/>
        <end position="17"/>
    </location>
</feature>
<feature type="chain" id="PRO_0000018161" description="Outer membrane lipoprotein SlyB">
    <location>
        <begin position="18"/>
        <end position="155"/>
    </location>
</feature>
<feature type="lipid moiety-binding region" description="N-palmitoyl cysteine" evidence="1">
    <location>
        <position position="18"/>
    </location>
</feature>
<feature type="lipid moiety-binding region" description="S-diacylglycerol cysteine" evidence="1">
    <location>
        <position position="18"/>
    </location>
</feature>
<proteinExistence type="evidence at transcript level"/>
<accession>P0A905</accession>
<accession>P55741</accession>
<accession>P76183</accession>
<dbReference type="EMBL" id="U00096">
    <property type="protein sequence ID" value="AAT48133.1"/>
    <property type="molecule type" value="Genomic_DNA"/>
</dbReference>
<dbReference type="EMBL" id="AP009048">
    <property type="protein sequence ID" value="BAA15402.1"/>
    <property type="molecule type" value="Genomic_DNA"/>
</dbReference>
<dbReference type="PIR" id="C64921">
    <property type="entry name" value="C64921"/>
</dbReference>
<dbReference type="RefSeq" id="WP_000597196.1">
    <property type="nucleotide sequence ID" value="NZ_STEB01000003.1"/>
</dbReference>
<dbReference type="RefSeq" id="YP_025304.1">
    <property type="nucleotide sequence ID" value="NC_000913.3"/>
</dbReference>
<dbReference type="SMR" id="P0A905"/>
<dbReference type="BioGRID" id="4263490">
    <property type="interactions" value="215"/>
</dbReference>
<dbReference type="BioGRID" id="851142">
    <property type="interactions" value="1"/>
</dbReference>
<dbReference type="FunCoup" id="P0A905">
    <property type="interactions" value="99"/>
</dbReference>
<dbReference type="IntAct" id="P0A905">
    <property type="interactions" value="4"/>
</dbReference>
<dbReference type="STRING" id="511145.b1641"/>
<dbReference type="jPOST" id="P0A905"/>
<dbReference type="PaxDb" id="511145-b1641"/>
<dbReference type="EnsemblBacteria" id="AAT48133">
    <property type="protein sequence ID" value="AAT48133"/>
    <property type="gene ID" value="b1641"/>
</dbReference>
<dbReference type="GeneID" id="93775795"/>
<dbReference type="GeneID" id="946801"/>
<dbReference type="KEGG" id="ecj:JW1633"/>
<dbReference type="KEGG" id="eco:b1641"/>
<dbReference type="KEGG" id="ecoc:C3026_09425"/>
<dbReference type="PATRIC" id="fig|1411691.4.peg.619"/>
<dbReference type="EchoBASE" id="EB3185"/>
<dbReference type="eggNOG" id="COG3133">
    <property type="taxonomic scope" value="Bacteria"/>
</dbReference>
<dbReference type="HOGENOM" id="CLU_090265_3_1_6"/>
<dbReference type="InParanoid" id="P0A905"/>
<dbReference type="OMA" id="IVVVQKY"/>
<dbReference type="OrthoDB" id="5298161at2"/>
<dbReference type="PhylomeDB" id="P0A905"/>
<dbReference type="BioCyc" id="EcoCyc:G6881-MONOMER"/>
<dbReference type="PRO" id="PR:P0A905"/>
<dbReference type="Proteomes" id="UP000000625">
    <property type="component" value="Chromosome"/>
</dbReference>
<dbReference type="GO" id="GO:0009279">
    <property type="term" value="C:cell outer membrane"/>
    <property type="evidence" value="ECO:0000314"/>
    <property type="project" value="EcoCyc"/>
</dbReference>
<dbReference type="InterPro" id="IPR051407">
    <property type="entry name" value="Bact_OM_lipoprot/Surf_antigen"/>
</dbReference>
<dbReference type="InterPro" id="IPR008816">
    <property type="entry name" value="Gly_zipper_2TM_dom"/>
</dbReference>
<dbReference type="PANTHER" id="PTHR35603">
    <property type="match status" value="1"/>
</dbReference>
<dbReference type="PANTHER" id="PTHR35603:SF1">
    <property type="entry name" value="OUTER MEMBRANE LIPOPROTEIN SLYB"/>
    <property type="match status" value="1"/>
</dbReference>
<dbReference type="Pfam" id="PF05433">
    <property type="entry name" value="Rick_17kDa_Anti"/>
    <property type="match status" value="1"/>
</dbReference>
<dbReference type="PROSITE" id="PS51257">
    <property type="entry name" value="PROKAR_LIPOPROTEIN"/>
    <property type="match status" value="1"/>
</dbReference>
<name>SLYB_ECOLI</name>
<gene>
    <name type="primary">slyB</name>
    <name type="ordered locus">b1641</name>
    <name type="ordered locus">JW1633</name>
</gene>
<evidence type="ECO:0000255" key="1">
    <source>
        <dbReference type="PROSITE-ProRule" id="PRU00303"/>
    </source>
</evidence>
<evidence type="ECO:0000269" key="2">
    <source>
    </source>
</evidence>
<evidence type="ECO:0000305" key="3"/>
<reference key="1">
    <citation type="journal article" date="1995" name="Mol. Gen. Genet.">
        <title>SlyA, a regulatory protein from Salmonella typhimurium, induces a haemolytic and pore-forming protein in Escherichia coli.</title>
        <authorList>
            <person name="Ludwig A."/>
            <person name="Tengel C."/>
            <person name="Bauer S."/>
            <person name="Bubert A."/>
            <person name="Benz R."/>
            <person name="Mollenkopf H.-J."/>
            <person name="Goebel W."/>
        </authorList>
    </citation>
    <scope>NUCLEOTIDE SEQUENCE [GENOMIC DNA]</scope>
</reference>
<reference key="2">
    <citation type="journal article" date="1996" name="DNA Res.">
        <title>A 570-kb DNA sequence of the Escherichia coli K-12 genome corresponding to the 28.0-40.1 min region on the linkage map.</title>
        <authorList>
            <person name="Aiba H."/>
            <person name="Baba T."/>
            <person name="Fujita K."/>
            <person name="Hayashi K."/>
            <person name="Inada T."/>
            <person name="Isono K."/>
            <person name="Itoh T."/>
            <person name="Kasai H."/>
            <person name="Kashimoto K."/>
            <person name="Kimura S."/>
            <person name="Kitakawa M."/>
            <person name="Kitagawa M."/>
            <person name="Makino K."/>
            <person name="Miki T."/>
            <person name="Mizobuchi K."/>
            <person name="Mori H."/>
            <person name="Mori T."/>
            <person name="Motomura K."/>
            <person name="Nakade S."/>
            <person name="Nakamura Y."/>
            <person name="Nashimoto H."/>
            <person name="Nishio Y."/>
            <person name="Oshima T."/>
            <person name="Saito N."/>
            <person name="Sampei G."/>
            <person name="Seki Y."/>
            <person name="Sivasundaram S."/>
            <person name="Tagami H."/>
            <person name="Takeda J."/>
            <person name="Takemoto K."/>
            <person name="Takeuchi Y."/>
            <person name="Wada C."/>
            <person name="Yamamoto Y."/>
            <person name="Horiuchi T."/>
        </authorList>
    </citation>
    <scope>NUCLEOTIDE SEQUENCE [LARGE SCALE GENOMIC DNA]</scope>
    <source>
        <strain>K12 / W3110 / ATCC 27325 / DSM 5911</strain>
    </source>
</reference>
<reference key="3">
    <citation type="journal article" date="1997" name="Science">
        <title>The complete genome sequence of Escherichia coli K-12.</title>
        <authorList>
            <person name="Blattner F.R."/>
            <person name="Plunkett G. III"/>
            <person name="Bloch C.A."/>
            <person name="Perna N.T."/>
            <person name="Burland V."/>
            <person name="Riley M."/>
            <person name="Collado-Vides J."/>
            <person name="Glasner J.D."/>
            <person name="Rode C.K."/>
            <person name="Mayhew G.F."/>
            <person name="Gregor J."/>
            <person name="Davis N.W."/>
            <person name="Kirkpatrick H.A."/>
            <person name="Goeden M.A."/>
            <person name="Rose D.J."/>
            <person name="Mau B."/>
            <person name="Shao Y."/>
        </authorList>
    </citation>
    <scope>NUCLEOTIDE SEQUENCE [LARGE SCALE GENOMIC DNA]</scope>
    <source>
        <strain>K12 / MG1655 / ATCC 47076</strain>
    </source>
</reference>
<reference key="4">
    <citation type="journal article" date="2006" name="Nucleic Acids Res.">
        <title>Escherichia coli K-12: a cooperatively developed annotation snapshot -- 2005.</title>
        <authorList>
            <person name="Riley M."/>
            <person name="Abe T."/>
            <person name="Arnaud M.B."/>
            <person name="Berlyn M.K.B."/>
            <person name="Blattner F.R."/>
            <person name="Chaudhuri R.R."/>
            <person name="Glasner J.D."/>
            <person name="Horiuchi T."/>
            <person name="Keseler I.M."/>
            <person name="Kosuge T."/>
            <person name="Mori H."/>
            <person name="Perna N.T."/>
            <person name="Plunkett G. III"/>
            <person name="Rudd K.E."/>
            <person name="Serres M.H."/>
            <person name="Thomas G.H."/>
            <person name="Thomson N.R."/>
            <person name="Wishart D."/>
            <person name="Wanner B.L."/>
        </authorList>
    </citation>
    <scope>SEQUENCE REVISION TO 98</scope>
</reference>
<reference key="5">
    <citation type="journal article" date="2006" name="Mol. Syst. Biol.">
        <title>Highly accurate genome sequences of Escherichia coli K-12 strains MG1655 and W3110.</title>
        <authorList>
            <person name="Hayashi K."/>
            <person name="Morooka N."/>
            <person name="Yamamoto Y."/>
            <person name="Fujita K."/>
            <person name="Isono K."/>
            <person name="Choi S."/>
            <person name="Ohtsubo E."/>
            <person name="Baba T."/>
            <person name="Wanner B.L."/>
            <person name="Mori H."/>
            <person name="Horiuchi T."/>
        </authorList>
    </citation>
    <scope>NUCLEOTIDE SEQUENCE [LARGE SCALE GENOMIC DNA]</scope>
    <source>
        <strain>K12 / W3110 / ATCC 27325 / DSM 5911</strain>
    </source>
</reference>
<reference key="6">
    <citation type="journal article" date="2003" name="J. Bacteriol.">
        <title>Identification and molecular characterization of the Mg2+ stimulon of Escherichia coli.</title>
        <authorList>
            <person name="Minagawa S."/>
            <person name="Ogasawara H."/>
            <person name="Kato A."/>
            <person name="Yamamoto K."/>
            <person name="Eguchi Y."/>
            <person name="Oshima T."/>
            <person name="Mori H."/>
            <person name="Ishihama A."/>
            <person name="Utsumi R."/>
        </authorList>
    </citation>
    <scope>INDUCTION</scope>
    <source>
        <strain>K12</strain>
    </source>
</reference>